<reference key="1">
    <citation type="journal article" date="1995" name="Gene">
        <title>The cDNA encoding canine dihydrolipoamide dehydrogenase contains multiple termination signals.</title>
        <authorList>
            <person name="Martins A.S."/>
            <person name="Greene L.J."/>
            <person name="Yoho L.L."/>
            <person name="Milsted A."/>
        </authorList>
    </citation>
    <scope>NUCLEOTIDE SEQUENCE [MRNA]</scope>
    <source>
        <strain>Mongrel</strain>
        <tissue>Skeletal muscle</tissue>
    </source>
</reference>
<reference key="2">
    <citation type="journal article" date="1997" name="Electrophoresis">
        <title>HSC-2DPAGE and the two-dimensional gel electrophoresis database of dog heart proteins.</title>
        <authorList>
            <person name="Dunn M.J."/>
            <person name="Corbett J.M."/>
            <person name="Wheeler C.H."/>
        </authorList>
    </citation>
    <scope>PROTEIN SEQUENCE OF 36-49</scope>
    <source>
        <tissue>Heart</tissue>
    </source>
</reference>
<feature type="transit peptide" description="Mitochondrion" evidence="6">
    <location>
        <begin position="1"/>
        <end position="35"/>
    </location>
</feature>
<feature type="chain" id="PRO_0000030294" description="Dihydrolipoyl dehydrogenase, mitochondrial">
    <location>
        <begin position="36"/>
        <end position="509"/>
    </location>
</feature>
<feature type="active site" description="Proton acceptor" evidence="3">
    <location>
        <position position="487"/>
    </location>
</feature>
<feature type="binding site" evidence="2">
    <location>
        <begin position="71"/>
        <end position="80"/>
    </location>
    <ligand>
        <name>FAD</name>
        <dbReference type="ChEBI" id="CHEBI:57692"/>
    </ligand>
</feature>
<feature type="binding site" evidence="2">
    <location>
        <position position="89"/>
    </location>
    <ligand>
        <name>FAD</name>
        <dbReference type="ChEBI" id="CHEBI:57692"/>
    </ligand>
</feature>
<feature type="binding site" evidence="2">
    <location>
        <position position="154"/>
    </location>
    <ligand>
        <name>FAD</name>
        <dbReference type="ChEBI" id="CHEBI:57692"/>
    </ligand>
</feature>
<feature type="binding site" evidence="2">
    <location>
        <begin position="183"/>
        <end position="185"/>
    </location>
    <ligand>
        <name>FAD</name>
        <dbReference type="ChEBI" id="CHEBI:57692"/>
    </ligand>
</feature>
<feature type="binding site" evidence="2">
    <location>
        <begin position="220"/>
        <end position="227"/>
    </location>
    <ligand>
        <name>NAD(+)</name>
        <dbReference type="ChEBI" id="CHEBI:57540"/>
    </ligand>
</feature>
<feature type="binding site" evidence="2">
    <location>
        <position position="243"/>
    </location>
    <ligand>
        <name>NAD(+)</name>
        <dbReference type="ChEBI" id="CHEBI:57540"/>
    </ligand>
</feature>
<feature type="binding site" evidence="2">
    <location>
        <position position="278"/>
    </location>
    <ligand>
        <name>NAD(+)</name>
        <dbReference type="ChEBI" id="CHEBI:57540"/>
    </ligand>
</feature>
<feature type="binding site" evidence="2">
    <location>
        <position position="314"/>
    </location>
    <ligand>
        <name>NAD(+)</name>
        <dbReference type="ChEBI" id="CHEBI:57540"/>
    </ligand>
</feature>
<feature type="binding site" evidence="2">
    <location>
        <position position="355"/>
    </location>
    <ligand>
        <name>FAD</name>
        <dbReference type="ChEBI" id="CHEBI:57692"/>
    </ligand>
</feature>
<feature type="binding site" evidence="2">
    <location>
        <begin position="361"/>
        <end position="364"/>
    </location>
    <ligand>
        <name>FAD</name>
        <dbReference type="ChEBI" id="CHEBI:57692"/>
    </ligand>
</feature>
<feature type="site" description="Important for interaction with PDHX and activity of pyruvate dehydrogenase complex" evidence="2">
    <location>
        <position position="448"/>
    </location>
</feature>
<feature type="site" description="Important for interaction with PDHX and activity of pyruvate dehydrogenase complex" evidence="2">
    <location>
        <position position="473"/>
    </location>
</feature>
<feature type="modified residue" description="N6-acetyllysine; alternate" evidence="1">
    <location>
        <position position="66"/>
    </location>
</feature>
<feature type="modified residue" description="N6-succinyllysine; alternate" evidence="1">
    <location>
        <position position="66"/>
    </location>
</feature>
<feature type="modified residue" description="N6-acetyllysine; alternate" evidence="1">
    <location>
        <position position="104"/>
    </location>
</feature>
<feature type="modified residue" description="N6-succinyllysine; alternate" evidence="1">
    <location>
        <position position="104"/>
    </location>
</feature>
<feature type="modified residue" description="N6-acetyllysine; alternate" evidence="1">
    <location>
        <position position="122"/>
    </location>
</feature>
<feature type="modified residue" description="N6-succinyllysine; alternate" evidence="1">
    <location>
        <position position="122"/>
    </location>
</feature>
<feature type="modified residue" description="N6-acetyllysine; alternate" evidence="1">
    <location>
        <position position="132"/>
    </location>
</feature>
<feature type="modified residue" description="N6-succinyllysine; alternate" evidence="1">
    <location>
        <position position="132"/>
    </location>
</feature>
<feature type="modified residue" description="N6-acetyllysine; alternate" evidence="2">
    <location>
        <position position="143"/>
    </location>
</feature>
<feature type="modified residue" description="N6-succinyllysine; alternate" evidence="1">
    <location>
        <position position="143"/>
    </location>
</feature>
<feature type="modified residue" description="N6-succinyllysine" evidence="1">
    <location>
        <position position="159"/>
    </location>
</feature>
<feature type="modified residue" description="N6-succinyllysine" evidence="1">
    <location>
        <position position="166"/>
    </location>
</feature>
<feature type="modified residue" description="N6-succinyllysine" evidence="1">
    <location>
        <position position="273"/>
    </location>
</feature>
<feature type="modified residue" description="N6-succinyllysine" evidence="1">
    <location>
        <position position="277"/>
    </location>
</feature>
<feature type="modified residue" description="Phosphoserine" evidence="1">
    <location>
        <position position="285"/>
    </location>
</feature>
<feature type="modified residue" description="Phosphoserine" evidence="4">
    <location>
        <position position="297"/>
    </location>
</feature>
<feature type="modified residue" description="N6-acetyllysine" evidence="1">
    <location>
        <position position="346"/>
    </location>
</feature>
<feature type="modified residue" description="N6-acetyllysine; alternate" evidence="2">
    <location>
        <position position="410"/>
    </location>
</feature>
<feature type="modified residue" description="N6-succinyllysine; alternate" evidence="1">
    <location>
        <position position="410"/>
    </location>
</feature>
<feature type="modified residue" description="N6-acetyllysine" evidence="2">
    <location>
        <position position="417"/>
    </location>
</feature>
<feature type="modified residue" description="N6-acetyllysine" evidence="1">
    <location>
        <position position="420"/>
    </location>
</feature>
<feature type="modified residue" description="N6-succinyllysine" evidence="1">
    <location>
        <position position="430"/>
    </location>
</feature>
<feature type="modified residue" description="Phosphoserine" evidence="2">
    <location>
        <position position="502"/>
    </location>
</feature>
<feature type="modified residue" description="N6-acetyllysine; alternate" evidence="1">
    <location>
        <position position="505"/>
    </location>
</feature>
<feature type="modified residue" description="N6-succinyllysine; alternate" evidence="1">
    <location>
        <position position="505"/>
    </location>
</feature>
<feature type="disulfide bond" description="Redox-active" evidence="3">
    <location>
        <begin position="80"/>
        <end position="85"/>
    </location>
</feature>
<organism>
    <name type="scientific">Canis lupus familiaris</name>
    <name type="common">Dog</name>
    <name type="synonym">Canis familiaris</name>
    <dbReference type="NCBI Taxonomy" id="9615"/>
    <lineage>
        <taxon>Eukaryota</taxon>
        <taxon>Metazoa</taxon>
        <taxon>Chordata</taxon>
        <taxon>Craniata</taxon>
        <taxon>Vertebrata</taxon>
        <taxon>Euteleostomi</taxon>
        <taxon>Mammalia</taxon>
        <taxon>Eutheria</taxon>
        <taxon>Laurasiatheria</taxon>
        <taxon>Carnivora</taxon>
        <taxon>Caniformia</taxon>
        <taxon>Canidae</taxon>
        <taxon>Canis</taxon>
    </lineage>
</organism>
<evidence type="ECO:0000250" key="1">
    <source>
        <dbReference type="UniProtKB" id="O08749"/>
    </source>
</evidence>
<evidence type="ECO:0000250" key="2">
    <source>
        <dbReference type="UniProtKB" id="P09622"/>
    </source>
</evidence>
<evidence type="ECO:0000250" key="3">
    <source>
        <dbReference type="UniProtKB" id="P09624"/>
    </source>
</evidence>
<evidence type="ECO:0000250" key="4">
    <source>
        <dbReference type="UniProtKB" id="Q6P6R2"/>
    </source>
</evidence>
<evidence type="ECO:0000250" key="5">
    <source>
        <dbReference type="UniProtKB" id="Q811C4"/>
    </source>
</evidence>
<evidence type="ECO:0000269" key="6">
    <source>
    </source>
</evidence>
<evidence type="ECO:0000305" key="7"/>
<sequence>MQSWSRVYCSLAKRGHFSRISHGLQAVSAVPLRTYADQPIDADVTVIGSGPGGYVAAIKAAQLGFKTVCVEKNETLGGTCLNVGCIPSKALLNNSHYYHMAHGKDFASRGIEMSEVRLNLEKMMEQKSTAVKALTGGIAHLFKQNKVVHVNGYGKITGKNQVTAKKADGSTQVIDTKNILIATGSEVTPFPGITIDEDTIVSSTGALSLKKVPEKMVVIGAGVIGVELGSVWQRLGADVTAVEFLGHVGGVGIDMEISKNFQRILQKQGFKFKLNTKVTGATKKSDGKIDVSIEGASGGKAEVITCDVLLVCIGRRPFTQNLGLEELGIELDPRGRIPVNTRFQTKIPNIYAIGDVVAGPMLAHKAEDEGIICVEGMAGGAVPIDYNCVPSVIYTHPEVAWVGKSEEQLKEEGIEYKVGKFPFAANSRAKTNADTDGMVKILGQKSTDRVLGAHILGPGAGEMVNEAALALEYGASCEDIARVCHAHPTLSEAFREANLAASFGKSINF</sequence>
<proteinExistence type="evidence at protein level"/>
<protein>
    <recommendedName>
        <fullName>Dihydrolipoyl dehydrogenase, mitochondrial</fullName>
        <ecNumber evidence="2">1.8.1.4</ecNumber>
    </recommendedName>
    <alternativeName>
        <fullName>Dihydrolipoamide dehydrogenase</fullName>
    </alternativeName>
</protein>
<comment type="function">
    <text evidence="2 5">Lipoamide dehydrogenase is a component of the glycine cleavage system as well as an E3 component of three alpha-ketoacid dehydrogenase complexes (pyruvate-, alpha-ketoglutarate-, and branched-chain amino acid-dehydrogenase complex). The 2-oxoglutarate dehydrogenase complex is mainly active in the mitochondrion. A fraction of the 2-oxoglutarate dehydrogenase complex also localizes in the nucleus and is required for lysine succinylation of histones: associates with KAT2A on chromatin and provides succinyl-CoA to histone succinyltransferase KAT2A. In monomeric form may have additional moonlighting function as serine protease (By similarity). Involved in the hyperactivation of spermatazoa during capacitation and in the spermatazoal acrosome reaction (By similarity).</text>
</comment>
<comment type="catalytic activity">
    <reaction evidence="2">
        <text>N(6)-[(R)-dihydrolipoyl]-L-lysyl-[protein] + NAD(+) = N(6)-[(R)-lipoyl]-L-lysyl-[protein] + NADH + H(+)</text>
        <dbReference type="Rhea" id="RHEA:15045"/>
        <dbReference type="Rhea" id="RHEA-COMP:10474"/>
        <dbReference type="Rhea" id="RHEA-COMP:10475"/>
        <dbReference type="ChEBI" id="CHEBI:15378"/>
        <dbReference type="ChEBI" id="CHEBI:57540"/>
        <dbReference type="ChEBI" id="CHEBI:57945"/>
        <dbReference type="ChEBI" id="CHEBI:83099"/>
        <dbReference type="ChEBI" id="CHEBI:83100"/>
        <dbReference type="EC" id="1.8.1.4"/>
    </reaction>
</comment>
<comment type="cofactor">
    <cofactor evidence="2">
        <name>FAD</name>
        <dbReference type="ChEBI" id="CHEBI:57692"/>
    </cofactor>
    <text evidence="2">Binds 1 FAD per subunit.</text>
</comment>
<comment type="subunit">
    <text evidence="1 2">Homodimer. Part of the multimeric pyruvate dehydrogenase complex that contains multiple copies of pyruvate dehydrogenase (subunits PDHA (PDHA1 or PDHA2) and PDHB, E1), dihydrolipoamide acetyltransferase (DLAT, E2) and lipoamide dehydrogenase (DLD, E3). These subunits are bound to an inner core composed of about 48 DLAT and 12 PDHX molecules (by non covalent bonds). The 2-oxoglutarate dehydrogenase complex is composed of OGDH (2-oxoglutarate dehydrogenase; E1), DLST (dihydrolipoamide succinyltransferase; E2), DLD (dihydrolipoamide dehydrogenase; E3) and the assembly factor KGD4 (By similarity). It contains multiple copies of the three enzymatic components (E1, E2 and E3). In the nucleus, the 2-oxoglutarate dehydrogenase complex associates with KAT2A. Interacts with PDHX.</text>
</comment>
<comment type="subcellular location">
    <subcellularLocation>
        <location evidence="2">Mitochondrion matrix</location>
    </subcellularLocation>
    <subcellularLocation>
        <location evidence="2">Nucleus</location>
    </subcellularLocation>
    <subcellularLocation>
        <location evidence="5">Cell projection</location>
        <location evidence="5">Cilium</location>
        <location evidence="5">Flagellum</location>
    </subcellularLocation>
    <subcellularLocation>
        <location evidence="2">Cytoplasmic vesicle</location>
        <location evidence="2">Secretory vesicle</location>
        <location evidence="2">Acrosome</location>
    </subcellularLocation>
    <text evidence="2">Mainly localizes in the mitochondrion. A small fraction localizes to the nucleus, where the 2-oxoglutarate dehydrogenase complex is required for histone succinylation.</text>
</comment>
<comment type="PTM">
    <text evidence="5">Tyrosine phosphorylated.</text>
</comment>
<comment type="miscellaneous">
    <text evidence="3">The active site is a redox-active disulfide bond.</text>
</comment>
<comment type="similarity">
    <text evidence="7">Belongs to the class-I pyridine nucleotide-disulfide oxidoreductase family.</text>
</comment>
<name>DLDH_CANLF</name>
<accession>P49819</accession>
<keyword id="KW-0007">Acetylation</keyword>
<keyword id="KW-0966">Cell projection</keyword>
<keyword id="KW-0969">Cilium</keyword>
<keyword id="KW-0968">Cytoplasmic vesicle</keyword>
<keyword id="KW-0903">Direct protein sequencing</keyword>
<keyword id="KW-1015">Disulfide bond</keyword>
<keyword id="KW-0274">FAD</keyword>
<keyword id="KW-0282">Flagellum</keyword>
<keyword id="KW-0285">Flavoprotein</keyword>
<keyword id="KW-0496">Mitochondrion</keyword>
<keyword id="KW-0520">NAD</keyword>
<keyword id="KW-0539">Nucleus</keyword>
<keyword id="KW-0560">Oxidoreductase</keyword>
<keyword id="KW-0597">Phosphoprotein</keyword>
<keyword id="KW-0676">Redox-active center</keyword>
<keyword id="KW-1185">Reference proteome</keyword>
<keyword id="KW-0809">Transit peptide</keyword>
<dbReference type="EC" id="1.8.1.4" evidence="2"/>
<dbReference type="EMBL" id="U19872">
    <property type="protein sequence ID" value="AAA87174.1"/>
    <property type="molecule type" value="mRNA"/>
</dbReference>
<dbReference type="PIR" id="JC4241">
    <property type="entry name" value="JC4241"/>
</dbReference>
<dbReference type="RefSeq" id="NP_001003294.1">
    <property type="nucleotide sequence ID" value="NM_001003294.1"/>
</dbReference>
<dbReference type="SMR" id="P49819"/>
<dbReference type="FunCoup" id="P49819">
    <property type="interactions" value="1530"/>
</dbReference>
<dbReference type="STRING" id="9615.ENSCAFP00000005721"/>
<dbReference type="SwissPalm" id="P49819"/>
<dbReference type="PaxDb" id="9612-ENSCAFP00000005721"/>
<dbReference type="GeneID" id="403978"/>
<dbReference type="KEGG" id="cfa:403978"/>
<dbReference type="CTD" id="1738"/>
<dbReference type="eggNOG" id="KOG1335">
    <property type="taxonomic scope" value="Eukaryota"/>
</dbReference>
<dbReference type="InParanoid" id="P49819"/>
<dbReference type="OrthoDB" id="361797at2759"/>
<dbReference type="SABIO-RK" id="P49819"/>
<dbReference type="Proteomes" id="UP000002254">
    <property type="component" value="Unplaced"/>
</dbReference>
<dbReference type="Proteomes" id="UP000694429">
    <property type="component" value="Unplaced"/>
</dbReference>
<dbReference type="Proteomes" id="UP000694542">
    <property type="component" value="Unplaced"/>
</dbReference>
<dbReference type="Proteomes" id="UP000805418">
    <property type="component" value="Unplaced"/>
</dbReference>
<dbReference type="GO" id="GO:0001669">
    <property type="term" value="C:acrosomal vesicle"/>
    <property type="evidence" value="ECO:0007669"/>
    <property type="project" value="UniProtKB-SubCell"/>
</dbReference>
<dbReference type="GO" id="GO:0005759">
    <property type="term" value="C:mitochondrial matrix"/>
    <property type="evidence" value="ECO:0007669"/>
    <property type="project" value="UniProtKB-SubCell"/>
</dbReference>
<dbReference type="GO" id="GO:0005739">
    <property type="term" value="C:mitochondrion"/>
    <property type="evidence" value="ECO:0000250"/>
    <property type="project" value="UniProtKB"/>
</dbReference>
<dbReference type="GO" id="GO:0031514">
    <property type="term" value="C:motile cilium"/>
    <property type="evidence" value="ECO:0007669"/>
    <property type="project" value="UniProtKB-SubCell"/>
</dbReference>
<dbReference type="GO" id="GO:0005634">
    <property type="term" value="C:nucleus"/>
    <property type="evidence" value="ECO:0000250"/>
    <property type="project" value="UniProtKB"/>
</dbReference>
<dbReference type="GO" id="GO:0045252">
    <property type="term" value="C:oxoglutarate dehydrogenase complex"/>
    <property type="evidence" value="ECO:0000250"/>
    <property type="project" value="UniProtKB"/>
</dbReference>
<dbReference type="GO" id="GO:0004148">
    <property type="term" value="F:dihydrolipoyl dehydrogenase (NADH) activity"/>
    <property type="evidence" value="ECO:0000250"/>
    <property type="project" value="UniProtKB"/>
</dbReference>
<dbReference type="GO" id="GO:0050660">
    <property type="term" value="F:flavin adenine dinucleotide binding"/>
    <property type="evidence" value="ECO:0000318"/>
    <property type="project" value="GO_Central"/>
</dbReference>
<dbReference type="GO" id="GO:0006103">
    <property type="term" value="P:2-oxoglutarate metabolic process"/>
    <property type="evidence" value="ECO:0000318"/>
    <property type="project" value="GO_Central"/>
</dbReference>
<dbReference type="GO" id="GO:0006090">
    <property type="term" value="P:pyruvate metabolic process"/>
    <property type="evidence" value="ECO:0000318"/>
    <property type="project" value="GO_Central"/>
</dbReference>
<dbReference type="FunFam" id="3.30.390.30:FF:000001">
    <property type="entry name" value="Dihydrolipoyl dehydrogenase"/>
    <property type="match status" value="1"/>
</dbReference>
<dbReference type="FunFam" id="3.50.50.60:FF:000025">
    <property type="entry name" value="Dihydrolipoyl dehydrogenase"/>
    <property type="match status" value="1"/>
</dbReference>
<dbReference type="FunFam" id="3.50.50.60:FF:000221">
    <property type="entry name" value="Dihydrolipoyl dehydrogenase, mitochondrial"/>
    <property type="match status" value="1"/>
</dbReference>
<dbReference type="Gene3D" id="3.30.390.30">
    <property type="match status" value="1"/>
</dbReference>
<dbReference type="Gene3D" id="3.50.50.60">
    <property type="entry name" value="FAD/NAD(P)-binding domain"/>
    <property type="match status" value="2"/>
</dbReference>
<dbReference type="InterPro" id="IPR050151">
    <property type="entry name" value="Class-I_Pyr_Nuc-Dis_Oxidored"/>
</dbReference>
<dbReference type="InterPro" id="IPR036188">
    <property type="entry name" value="FAD/NAD-bd_sf"/>
</dbReference>
<dbReference type="InterPro" id="IPR023753">
    <property type="entry name" value="FAD/NAD-binding_dom"/>
</dbReference>
<dbReference type="InterPro" id="IPR016156">
    <property type="entry name" value="FAD/NAD-linked_Rdtase_dimer_sf"/>
</dbReference>
<dbReference type="InterPro" id="IPR006258">
    <property type="entry name" value="Lipoamide_DH"/>
</dbReference>
<dbReference type="InterPro" id="IPR001100">
    <property type="entry name" value="Pyr_nuc-diS_OxRdtase"/>
</dbReference>
<dbReference type="InterPro" id="IPR004099">
    <property type="entry name" value="Pyr_nucl-diS_OxRdtase_dimer"/>
</dbReference>
<dbReference type="InterPro" id="IPR012999">
    <property type="entry name" value="Pyr_OxRdtase_I_AS"/>
</dbReference>
<dbReference type="NCBIfam" id="TIGR01350">
    <property type="entry name" value="lipoamide_DH"/>
    <property type="match status" value="1"/>
</dbReference>
<dbReference type="PANTHER" id="PTHR22912:SF151">
    <property type="entry name" value="DIHYDROLIPOYL DEHYDROGENASE, MITOCHONDRIAL"/>
    <property type="match status" value="1"/>
</dbReference>
<dbReference type="PANTHER" id="PTHR22912">
    <property type="entry name" value="DISULFIDE OXIDOREDUCTASE"/>
    <property type="match status" value="1"/>
</dbReference>
<dbReference type="Pfam" id="PF07992">
    <property type="entry name" value="Pyr_redox_2"/>
    <property type="match status" value="1"/>
</dbReference>
<dbReference type="Pfam" id="PF02852">
    <property type="entry name" value="Pyr_redox_dim"/>
    <property type="match status" value="1"/>
</dbReference>
<dbReference type="PIRSF" id="PIRSF000350">
    <property type="entry name" value="Mercury_reductase_MerA"/>
    <property type="match status" value="1"/>
</dbReference>
<dbReference type="PRINTS" id="PR00368">
    <property type="entry name" value="FADPNR"/>
</dbReference>
<dbReference type="PRINTS" id="PR00411">
    <property type="entry name" value="PNDRDTASEI"/>
</dbReference>
<dbReference type="SUPFAM" id="SSF51905">
    <property type="entry name" value="FAD/NAD(P)-binding domain"/>
    <property type="match status" value="1"/>
</dbReference>
<dbReference type="SUPFAM" id="SSF55424">
    <property type="entry name" value="FAD/NAD-linked reductases, dimerisation (C-terminal) domain"/>
    <property type="match status" value="1"/>
</dbReference>
<dbReference type="PROSITE" id="PS00076">
    <property type="entry name" value="PYRIDINE_REDOX_1"/>
    <property type="match status" value="1"/>
</dbReference>
<gene>
    <name type="primary">DLD</name>
</gene>